<sequence>MPKLSKRLAGLASKIEDRVYEPLEAIALVKDNATAKFDETMEAHVRLGIDPKYTDQQLRTTVALPNGTGQTVRIAVVTRGEKVAEAKAAGAELAGDEDLVETIAKGEMEFDLLIATPDMMPKVAKLGRVLGPRGLMPNPKAGTVTIDLAGAIQEFKAGKLEFRADRTGIVHVRFGKASFTAEALLQNLKTLQETIDRNKPSGAKGRYWKSLYVTSTMGPSVEVDFSALQDIEQGS</sequence>
<proteinExistence type="inferred from homology"/>
<gene>
    <name evidence="1" type="primary">rplA</name>
    <name evidence="1" type="synonym">rpl1</name>
    <name type="ordered locus">SYNW2342</name>
</gene>
<keyword id="KW-0678">Repressor</keyword>
<keyword id="KW-0687">Ribonucleoprotein</keyword>
<keyword id="KW-0689">Ribosomal protein</keyword>
<keyword id="KW-0694">RNA-binding</keyword>
<keyword id="KW-0699">rRNA-binding</keyword>
<keyword id="KW-0810">Translation regulation</keyword>
<keyword id="KW-0820">tRNA-binding</keyword>
<comment type="function">
    <text evidence="1">Binds directly to 23S rRNA. The L1 stalk is quite mobile in the ribosome, and is involved in E site tRNA release.</text>
</comment>
<comment type="function">
    <text evidence="1">Protein L1 is also a translational repressor protein, it controls the translation of the L11 operon by binding to its mRNA.</text>
</comment>
<comment type="subunit">
    <text evidence="1">Part of the 50S ribosomal subunit.</text>
</comment>
<comment type="similarity">
    <text evidence="1">Belongs to the universal ribosomal protein uL1 family.</text>
</comment>
<protein>
    <recommendedName>
        <fullName evidence="1">Large ribosomal subunit protein uL1</fullName>
    </recommendedName>
    <alternativeName>
        <fullName evidence="2">50S ribosomal protein L1</fullName>
    </alternativeName>
</protein>
<name>RL1_PARMW</name>
<organism>
    <name type="scientific">Parasynechococcus marenigrum (strain WH8102)</name>
    <dbReference type="NCBI Taxonomy" id="84588"/>
    <lineage>
        <taxon>Bacteria</taxon>
        <taxon>Bacillati</taxon>
        <taxon>Cyanobacteriota</taxon>
        <taxon>Cyanophyceae</taxon>
        <taxon>Synechococcales</taxon>
        <taxon>Prochlorococcaceae</taxon>
        <taxon>Parasynechococcus</taxon>
        <taxon>Parasynechococcus marenigrum</taxon>
    </lineage>
</organism>
<accession>Q7U3T7</accession>
<evidence type="ECO:0000255" key="1">
    <source>
        <dbReference type="HAMAP-Rule" id="MF_01318"/>
    </source>
</evidence>
<evidence type="ECO:0000305" key="2"/>
<reference key="1">
    <citation type="journal article" date="2003" name="Nature">
        <title>The genome of a motile marine Synechococcus.</title>
        <authorList>
            <person name="Palenik B."/>
            <person name="Brahamsha B."/>
            <person name="Larimer F.W."/>
            <person name="Land M.L."/>
            <person name="Hauser L."/>
            <person name="Chain P."/>
            <person name="Lamerdin J.E."/>
            <person name="Regala W."/>
            <person name="Allen E.E."/>
            <person name="McCarren J."/>
            <person name="Paulsen I.T."/>
            <person name="Dufresne A."/>
            <person name="Partensky F."/>
            <person name="Webb E.A."/>
            <person name="Waterbury J."/>
        </authorList>
    </citation>
    <scope>NUCLEOTIDE SEQUENCE [LARGE SCALE GENOMIC DNA]</scope>
    <source>
        <strain>WH8102</strain>
    </source>
</reference>
<feature type="chain" id="PRO_0000125760" description="Large ribosomal subunit protein uL1">
    <location>
        <begin position="1"/>
        <end position="235"/>
    </location>
</feature>
<dbReference type="EMBL" id="BX569695">
    <property type="protein sequence ID" value="CAE08857.1"/>
    <property type="molecule type" value="Genomic_DNA"/>
</dbReference>
<dbReference type="RefSeq" id="WP_011129195.1">
    <property type="nucleotide sequence ID" value="NC_005070.1"/>
</dbReference>
<dbReference type="SMR" id="Q7U3T7"/>
<dbReference type="STRING" id="84588.SYNW2342"/>
<dbReference type="KEGG" id="syw:SYNW2342"/>
<dbReference type="eggNOG" id="COG0081">
    <property type="taxonomic scope" value="Bacteria"/>
</dbReference>
<dbReference type="HOGENOM" id="CLU_062853_0_0_3"/>
<dbReference type="Proteomes" id="UP000001422">
    <property type="component" value="Chromosome"/>
</dbReference>
<dbReference type="GO" id="GO:0015934">
    <property type="term" value="C:large ribosomal subunit"/>
    <property type="evidence" value="ECO:0007669"/>
    <property type="project" value="InterPro"/>
</dbReference>
<dbReference type="GO" id="GO:0019843">
    <property type="term" value="F:rRNA binding"/>
    <property type="evidence" value="ECO:0007669"/>
    <property type="project" value="UniProtKB-UniRule"/>
</dbReference>
<dbReference type="GO" id="GO:0003735">
    <property type="term" value="F:structural constituent of ribosome"/>
    <property type="evidence" value="ECO:0007669"/>
    <property type="project" value="InterPro"/>
</dbReference>
<dbReference type="GO" id="GO:0000049">
    <property type="term" value="F:tRNA binding"/>
    <property type="evidence" value="ECO:0007669"/>
    <property type="project" value="UniProtKB-KW"/>
</dbReference>
<dbReference type="GO" id="GO:0006417">
    <property type="term" value="P:regulation of translation"/>
    <property type="evidence" value="ECO:0007669"/>
    <property type="project" value="UniProtKB-KW"/>
</dbReference>
<dbReference type="GO" id="GO:0006412">
    <property type="term" value="P:translation"/>
    <property type="evidence" value="ECO:0007669"/>
    <property type="project" value="UniProtKB-UniRule"/>
</dbReference>
<dbReference type="CDD" id="cd00403">
    <property type="entry name" value="Ribosomal_L1"/>
    <property type="match status" value="1"/>
</dbReference>
<dbReference type="FunFam" id="3.40.50.790:FF:000001">
    <property type="entry name" value="50S ribosomal protein L1"/>
    <property type="match status" value="1"/>
</dbReference>
<dbReference type="Gene3D" id="3.30.190.20">
    <property type="match status" value="1"/>
</dbReference>
<dbReference type="Gene3D" id="3.40.50.790">
    <property type="match status" value="1"/>
</dbReference>
<dbReference type="HAMAP" id="MF_01318_B">
    <property type="entry name" value="Ribosomal_uL1_B"/>
    <property type="match status" value="1"/>
</dbReference>
<dbReference type="InterPro" id="IPR005878">
    <property type="entry name" value="Ribosom_uL1_bac-type"/>
</dbReference>
<dbReference type="InterPro" id="IPR002143">
    <property type="entry name" value="Ribosomal_uL1"/>
</dbReference>
<dbReference type="InterPro" id="IPR023674">
    <property type="entry name" value="Ribosomal_uL1-like"/>
</dbReference>
<dbReference type="InterPro" id="IPR028364">
    <property type="entry name" value="Ribosomal_uL1/biogenesis"/>
</dbReference>
<dbReference type="InterPro" id="IPR016095">
    <property type="entry name" value="Ribosomal_uL1_3-a/b-sand"/>
</dbReference>
<dbReference type="InterPro" id="IPR023673">
    <property type="entry name" value="Ribosomal_uL1_CS"/>
</dbReference>
<dbReference type="NCBIfam" id="TIGR01169">
    <property type="entry name" value="rplA_bact"/>
    <property type="match status" value="1"/>
</dbReference>
<dbReference type="PANTHER" id="PTHR36427">
    <property type="entry name" value="54S RIBOSOMAL PROTEIN L1, MITOCHONDRIAL"/>
    <property type="match status" value="1"/>
</dbReference>
<dbReference type="PANTHER" id="PTHR36427:SF3">
    <property type="entry name" value="LARGE RIBOSOMAL SUBUNIT PROTEIN UL1M"/>
    <property type="match status" value="1"/>
</dbReference>
<dbReference type="Pfam" id="PF00687">
    <property type="entry name" value="Ribosomal_L1"/>
    <property type="match status" value="1"/>
</dbReference>
<dbReference type="PIRSF" id="PIRSF002155">
    <property type="entry name" value="Ribosomal_L1"/>
    <property type="match status" value="1"/>
</dbReference>
<dbReference type="SUPFAM" id="SSF56808">
    <property type="entry name" value="Ribosomal protein L1"/>
    <property type="match status" value="1"/>
</dbReference>
<dbReference type="PROSITE" id="PS01199">
    <property type="entry name" value="RIBOSOMAL_L1"/>
    <property type="match status" value="1"/>
</dbReference>